<gene>
    <name evidence="1" type="primary">psd</name>
    <name type="ordered locus">BC_4335</name>
</gene>
<sequence>MRRTLYRLMIELTNGRFTSYILRKFAQSRLSSIIIPSYAKVFQINQDEMEKGLKEYRTLHELFTRKLKEGKRSIDTDASSIVSPVDGVFADHGPIEDTKTFDIKGKRYSIVDMLGNEERATRYAGGTYMVIYLSPSHYHRIHSPLSGSVTERFVLGRKSYPVNAAGMEYGKEPLSKNYRSVTEVSSDGEHMALVKVGAMFVNSIELLHERDTVQKGEEMAYFTFGSTVVLLFEKDMIEVVQELKSGQELRLGEKIATRLAHK</sequence>
<proteinExistence type="inferred from homology"/>
<dbReference type="EC" id="4.1.1.65" evidence="1"/>
<dbReference type="EMBL" id="AE016877">
    <property type="protein sequence ID" value="AAP11248.1"/>
    <property type="molecule type" value="Genomic_DNA"/>
</dbReference>
<dbReference type="RefSeq" id="NP_834047.1">
    <property type="nucleotide sequence ID" value="NC_004722.1"/>
</dbReference>
<dbReference type="RefSeq" id="WP_001255000.1">
    <property type="nucleotide sequence ID" value="NZ_CP138336.1"/>
</dbReference>
<dbReference type="SMR" id="Q818C6"/>
<dbReference type="STRING" id="226900.BC_4335"/>
<dbReference type="KEGG" id="bce:BC4335"/>
<dbReference type="PATRIC" id="fig|226900.8.peg.4483"/>
<dbReference type="HOGENOM" id="CLU_029061_4_0_9"/>
<dbReference type="OrthoDB" id="9802030at2"/>
<dbReference type="UniPathway" id="UPA00558">
    <property type="reaction ID" value="UER00616"/>
</dbReference>
<dbReference type="Proteomes" id="UP000001417">
    <property type="component" value="Chromosome"/>
</dbReference>
<dbReference type="GO" id="GO:0005886">
    <property type="term" value="C:plasma membrane"/>
    <property type="evidence" value="ECO:0007669"/>
    <property type="project" value="UniProtKB-SubCell"/>
</dbReference>
<dbReference type="GO" id="GO:0004609">
    <property type="term" value="F:phosphatidylserine decarboxylase activity"/>
    <property type="evidence" value="ECO:0000318"/>
    <property type="project" value="GO_Central"/>
</dbReference>
<dbReference type="GO" id="GO:0006646">
    <property type="term" value="P:phosphatidylethanolamine biosynthetic process"/>
    <property type="evidence" value="ECO:0000318"/>
    <property type="project" value="GO_Central"/>
</dbReference>
<dbReference type="HAMAP" id="MF_00662">
    <property type="entry name" value="PS_decarb_PSD_B_type1"/>
    <property type="match status" value="1"/>
</dbReference>
<dbReference type="InterPro" id="IPR003817">
    <property type="entry name" value="PS_Dcarbxylase"/>
</dbReference>
<dbReference type="InterPro" id="IPR033177">
    <property type="entry name" value="PSD-B"/>
</dbReference>
<dbReference type="InterPro" id="IPR033178">
    <property type="entry name" value="PSD_type1_pro"/>
</dbReference>
<dbReference type="NCBIfam" id="NF002853">
    <property type="entry name" value="PRK03140.1"/>
    <property type="match status" value="1"/>
</dbReference>
<dbReference type="NCBIfam" id="TIGR00163">
    <property type="entry name" value="PS_decarb"/>
    <property type="match status" value="1"/>
</dbReference>
<dbReference type="PANTHER" id="PTHR10067">
    <property type="entry name" value="PHOSPHATIDYLSERINE DECARBOXYLASE"/>
    <property type="match status" value="1"/>
</dbReference>
<dbReference type="PANTHER" id="PTHR10067:SF6">
    <property type="entry name" value="PHOSPHATIDYLSERINE DECARBOXYLASE PROENZYME, MITOCHONDRIAL"/>
    <property type="match status" value="1"/>
</dbReference>
<dbReference type="Pfam" id="PF02666">
    <property type="entry name" value="PS_Dcarbxylase"/>
    <property type="match status" value="1"/>
</dbReference>
<protein>
    <recommendedName>
        <fullName evidence="1">Phosphatidylserine decarboxylase proenzyme</fullName>
        <ecNumber evidence="1">4.1.1.65</ecNumber>
    </recommendedName>
    <component>
        <recommendedName>
            <fullName evidence="1">Phosphatidylserine decarboxylase alpha chain</fullName>
        </recommendedName>
    </component>
    <component>
        <recommendedName>
            <fullName evidence="1">Phosphatidylserine decarboxylase beta chain</fullName>
        </recommendedName>
    </component>
</protein>
<evidence type="ECO:0000255" key="1">
    <source>
        <dbReference type="HAMAP-Rule" id="MF_00662"/>
    </source>
</evidence>
<feature type="chain" id="PRO_0000029623" description="Phosphatidylserine decarboxylase beta chain" evidence="1">
    <location>
        <begin position="1"/>
        <end position="225"/>
    </location>
</feature>
<feature type="chain" id="PRO_0000029624" description="Phosphatidylserine decarboxylase alpha chain" evidence="1">
    <location>
        <begin position="226"/>
        <end position="262"/>
    </location>
</feature>
<feature type="active site" description="Charge relay system; for autoendoproteolytic cleavage activity" evidence="1">
    <location>
        <position position="86"/>
    </location>
</feature>
<feature type="active site" description="Charge relay system; for autoendoproteolytic cleavage activity" evidence="1">
    <location>
        <position position="142"/>
    </location>
</feature>
<feature type="active site" description="Charge relay system; for autoendoproteolytic cleavage activity" evidence="1">
    <location>
        <position position="226"/>
    </location>
</feature>
<feature type="active site" description="Schiff-base intermediate with substrate; via pyruvic acid; for decarboxylase activity" evidence="1">
    <location>
        <position position="226"/>
    </location>
</feature>
<feature type="site" description="Cleavage (non-hydrolytic); by autocatalysis" evidence="1">
    <location>
        <begin position="225"/>
        <end position="226"/>
    </location>
</feature>
<feature type="modified residue" description="Pyruvic acid (Ser); by autocatalysis" evidence="1">
    <location>
        <position position="226"/>
    </location>
</feature>
<name>PSD_BACCR</name>
<keyword id="KW-1003">Cell membrane</keyword>
<keyword id="KW-0210">Decarboxylase</keyword>
<keyword id="KW-0444">Lipid biosynthesis</keyword>
<keyword id="KW-0443">Lipid metabolism</keyword>
<keyword id="KW-0456">Lyase</keyword>
<keyword id="KW-0472">Membrane</keyword>
<keyword id="KW-0594">Phospholipid biosynthesis</keyword>
<keyword id="KW-1208">Phospholipid metabolism</keyword>
<keyword id="KW-0670">Pyruvate</keyword>
<keyword id="KW-1185">Reference proteome</keyword>
<keyword id="KW-0865">Zymogen</keyword>
<reference key="1">
    <citation type="journal article" date="2003" name="Nature">
        <title>Genome sequence of Bacillus cereus and comparative analysis with Bacillus anthracis.</title>
        <authorList>
            <person name="Ivanova N."/>
            <person name="Sorokin A."/>
            <person name="Anderson I."/>
            <person name="Galleron N."/>
            <person name="Candelon B."/>
            <person name="Kapatral V."/>
            <person name="Bhattacharyya A."/>
            <person name="Reznik G."/>
            <person name="Mikhailova N."/>
            <person name="Lapidus A."/>
            <person name="Chu L."/>
            <person name="Mazur M."/>
            <person name="Goltsman E."/>
            <person name="Larsen N."/>
            <person name="D'Souza M."/>
            <person name="Walunas T."/>
            <person name="Grechkin Y."/>
            <person name="Pusch G."/>
            <person name="Haselkorn R."/>
            <person name="Fonstein M."/>
            <person name="Ehrlich S.D."/>
            <person name="Overbeek R."/>
            <person name="Kyrpides N.C."/>
        </authorList>
    </citation>
    <scope>NUCLEOTIDE SEQUENCE [LARGE SCALE GENOMIC DNA]</scope>
    <source>
        <strain>ATCC 14579 / DSM 31 / CCUG 7414 / JCM 2152 / NBRC 15305 / NCIMB 9373 / NCTC 2599 / NRRL B-3711</strain>
    </source>
</reference>
<organism>
    <name type="scientific">Bacillus cereus (strain ATCC 14579 / DSM 31 / CCUG 7414 / JCM 2152 / NBRC 15305 / NCIMB 9373 / NCTC 2599 / NRRL B-3711)</name>
    <dbReference type="NCBI Taxonomy" id="226900"/>
    <lineage>
        <taxon>Bacteria</taxon>
        <taxon>Bacillati</taxon>
        <taxon>Bacillota</taxon>
        <taxon>Bacilli</taxon>
        <taxon>Bacillales</taxon>
        <taxon>Bacillaceae</taxon>
        <taxon>Bacillus</taxon>
        <taxon>Bacillus cereus group</taxon>
    </lineage>
</organism>
<comment type="function">
    <text evidence="1">Catalyzes the formation of phosphatidylethanolamine (PtdEtn) from phosphatidylserine (PtdSer).</text>
</comment>
<comment type="catalytic activity">
    <reaction evidence="1">
        <text>a 1,2-diacyl-sn-glycero-3-phospho-L-serine + H(+) = a 1,2-diacyl-sn-glycero-3-phosphoethanolamine + CO2</text>
        <dbReference type="Rhea" id="RHEA:20828"/>
        <dbReference type="ChEBI" id="CHEBI:15378"/>
        <dbReference type="ChEBI" id="CHEBI:16526"/>
        <dbReference type="ChEBI" id="CHEBI:57262"/>
        <dbReference type="ChEBI" id="CHEBI:64612"/>
        <dbReference type="EC" id="4.1.1.65"/>
    </reaction>
</comment>
<comment type="cofactor">
    <cofactor evidence="1">
        <name>pyruvate</name>
        <dbReference type="ChEBI" id="CHEBI:15361"/>
    </cofactor>
    <text evidence="1">Binds 1 pyruvoyl group covalently per subunit.</text>
</comment>
<comment type="pathway">
    <text evidence="1">Phospholipid metabolism; phosphatidylethanolamine biosynthesis; phosphatidylethanolamine from CDP-diacylglycerol: step 2/2.</text>
</comment>
<comment type="subunit">
    <text evidence="1">Heterodimer of a large membrane-associated beta subunit and a small pyruvoyl-containing alpha subunit.</text>
</comment>
<comment type="subcellular location">
    <subcellularLocation>
        <location evidence="1">Cell membrane</location>
        <topology evidence="1">Peripheral membrane protein</topology>
    </subcellularLocation>
</comment>
<comment type="PTM">
    <text evidence="1">Is synthesized initially as an inactive proenzyme. Formation of the active enzyme involves a self-maturation process in which the active site pyruvoyl group is generated from an internal serine residue via an autocatalytic post-translational modification. Two non-identical subunits are generated from the proenzyme in this reaction, and the pyruvate is formed at the N-terminus of the alpha chain, which is derived from the carboxyl end of the proenzyme. The autoendoproteolytic cleavage occurs by a canonical serine protease mechanism, in which the side chain hydroxyl group of the serine supplies its oxygen atom to form the C-terminus of the beta chain, while the remainder of the serine residue undergoes an oxidative deamination to produce ammonia and the pyruvoyl prosthetic group on the alpha chain. During this reaction, the Ser that is part of the protease active site of the proenzyme becomes the pyruvoyl prosthetic group, which constitutes an essential element of the active site of the mature decarboxylase.</text>
</comment>
<comment type="similarity">
    <text evidence="1">Belongs to the phosphatidylserine decarboxylase family. PSD-B subfamily. Prokaryotic type I sub-subfamily.</text>
</comment>
<accession>Q818C6</accession>